<dbReference type="EC" id="2.3.2.27" evidence="7"/>
<dbReference type="EMBL" id="AK009637">
    <property type="protein sequence ID" value="BAB26408.2"/>
    <property type="molecule type" value="mRNA"/>
</dbReference>
<dbReference type="EMBL" id="AK012269">
    <property type="protein sequence ID" value="BAB28131.1"/>
    <property type="molecule type" value="mRNA"/>
</dbReference>
<dbReference type="EMBL" id="AK016642">
    <property type="protein sequence ID" value="BAB30354.1"/>
    <property type="molecule type" value="mRNA"/>
</dbReference>
<dbReference type="EMBL" id="AC122876">
    <property type="status" value="NOT_ANNOTATED_CDS"/>
    <property type="molecule type" value="Genomic_DNA"/>
</dbReference>
<dbReference type="EMBL" id="BC006700">
    <property type="protein sequence ID" value="AAH06700.1"/>
    <property type="molecule type" value="mRNA"/>
</dbReference>
<dbReference type="EMBL" id="BC025430">
    <property type="protein sequence ID" value="AAH25430.1"/>
    <property type="molecule type" value="mRNA"/>
</dbReference>
<dbReference type="CCDS" id="CCDS17402.1"/>
<dbReference type="RefSeq" id="NP_001415863.1">
    <property type="nucleotide sequence ID" value="NM_001428934.1"/>
</dbReference>
<dbReference type="RefSeq" id="NP_001415864.1">
    <property type="nucleotide sequence ID" value="NM_001428935.1"/>
</dbReference>
<dbReference type="RefSeq" id="NP_001415865.1">
    <property type="nucleotide sequence ID" value="NM_001428936.1"/>
</dbReference>
<dbReference type="RefSeq" id="NP_080139.3">
    <property type="nucleotide sequence ID" value="NM_025863.3"/>
</dbReference>
<dbReference type="RefSeq" id="XP_006501980.1">
    <property type="nucleotide sequence ID" value="XM_006501917.3"/>
</dbReference>
<dbReference type="RefSeq" id="XP_011238502.1">
    <property type="nucleotide sequence ID" value="XM_011240200.1"/>
</dbReference>
<dbReference type="RefSeq" id="XP_011238503.1">
    <property type="nucleotide sequence ID" value="XM_011240201.2"/>
</dbReference>
<dbReference type="SMR" id="Q922Y2"/>
<dbReference type="BioGRID" id="211830">
    <property type="interactions" value="16"/>
</dbReference>
<dbReference type="FunCoup" id="Q922Y2">
    <property type="interactions" value="930"/>
</dbReference>
<dbReference type="STRING" id="10090.ENSMUSP00000103432"/>
<dbReference type="PhosphoSitePlus" id="Q922Y2"/>
<dbReference type="PaxDb" id="10090-ENSMUSP00000103432"/>
<dbReference type="ProteomicsDB" id="298304"/>
<dbReference type="Pumba" id="Q922Y2"/>
<dbReference type="DNASU" id="66949"/>
<dbReference type="Ensembl" id="ENSMUST00000107802.8">
    <property type="protein sequence ID" value="ENSMUSP00000103432.2"/>
    <property type="gene ID" value="ENSMUSG00000034317.15"/>
</dbReference>
<dbReference type="GeneID" id="66949"/>
<dbReference type="KEGG" id="mmu:66949"/>
<dbReference type="UCSC" id="uc008pmd.2">
    <property type="organism name" value="mouse"/>
</dbReference>
<dbReference type="AGR" id="MGI:1914199"/>
<dbReference type="CTD" id="286827"/>
<dbReference type="MGI" id="MGI:1914199">
    <property type="gene designation" value="Trim59"/>
</dbReference>
<dbReference type="VEuPathDB" id="HostDB:ENSMUSG00000034317"/>
<dbReference type="eggNOG" id="KOG2177">
    <property type="taxonomic scope" value="Eukaryota"/>
</dbReference>
<dbReference type="GeneTree" id="ENSGT00940000160146"/>
<dbReference type="InParanoid" id="Q922Y2"/>
<dbReference type="OMA" id="QEYTPHI"/>
<dbReference type="OrthoDB" id="6105938at2759"/>
<dbReference type="PhylomeDB" id="Q922Y2"/>
<dbReference type="TreeFam" id="TF331669"/>
<dbReference type="UniPathway" id="UPA00143"/>
<dbReference type="BioGRID-ORCS" id="66949">
    <property type="hits" value="2 hits in 78 CRISPR screens"/>
</dbReference>
<dbReference type="ChiTaRS" id="Trim59">
    <property type="organism name" value="mouse"/>
</dbReference>
<dbReference type="PRO" id="PR:Q922Y2"/>
<dbReference type="Proteomes" id="UP000000589">
    <property type="component" value="Chromosome 3"/>
</dbReference>
<dbReference type="RNAct" id="Q922Y2">
    <property type="molecule type" value="protein"/>
</dbReference>
<dbReference type="Bgee" id="ENSMUSG00000034317">
    <property type="expression patterns" value="Expressed in primitive streak and 247 other cell types or tissues"/>
</dbReference>
<dbReference type="ExpressionAtlas" id="Q922Y2">
    <property type="expression patterns" value="baseline and differential"/>
</dbReference>
<dbReference type="GO" id="GO:0005783">
    <property type="term" value="C:endoplasmic reticulum"/>
    <property type="evidence" value="ECO:0000314"/>
    <property type="project" value="MGI"/>
</dbReference>
<dbReference type="GO" id="GO:0005789">
    <property type="term" value="C:endoplasmic reticulum membrane"/>
    <property type="evidence" value="ECO:0007669"/>
    <property type="project" value="UniProtKB-SubCell"/>
</dbReference>
<dbReference type="GO" id="GO:0061630">
    <property type="term" value="F:ubiquitin protein ligase activity"/>
    <property type="evidence" value="ECO:0000314"/>
    <property type="project" value="MGI"/>
</dbReference>
<dbReference type="GO" id="GO:0008270">
    <property type="term" value="F:zinc ion binding"/>
    <property type="evidence" value="ECO:0007669"/>
    <property type="project" value="UniProtKB-KW"/>
</dbReference>
<dbReference type="GO" id="GO:0046597">
    <property type="term" value="P:host-mediated suppression of symbiont invasion"/>
    <property type="evidence" value="ECO:0000314"/>
    <property type="project" value="UniProtKB"/>
</dbReference>
<dbReference type="GO" id="GO:0045087">
    <property type="term" value="P:innate immune response"/>
    <property type="evidence" value="ECO:0000314"/>
    <property type="project" value="UniProtKB"/>
</dbReference>
<dbReference type="GO" id="GO:0043124">
    <property type="term" value="P:negative regulation of canonical NF-kappaB signal transduction"/>
    <property type="evidence" value="ECO:0000314"/>
    <property type="project" value="MGI"/>
</dbReference>
<dbReference type="GO" id="GO:0016567">
    <property type="term" value="P:protein ubiquitination"/>
    <property type="evidence" value="ECO:0007669"/>
    <property type="project" value="UniProtKB-UniPathway"/>
</dbReference>
<dbReference type="CDD" id="cd19790">
    <property type="entry name" value="Bbox2_TRIM59_C-XI"/>
    <property type="match status" value="1"/>
</dbReference>
<dbReference type="CDD" id="cd16763">
    <property type="entry name" value="RING-HC_TRIM59_C-V"/>
    <property type="match status" value="1"/>
</dbReference>
<dbReference type="FunFam" id="3.30.160.60:FF:000772">
    <property type="entry name" value="tripartite motif-containing protein 59"/>
    <property type="match status" value="1"/>
</dbReference>
<dbReference type="FunFam" id="3.30.40.10:FF:000297">
    <property type="entry name" value="tripartite motif-containing protein 59"/>
    <property type="match status" value="1"/>
</dbReference>
<dbReference type="Gene3D" id="3.30.160.60">
    <property type="entry name" value="Classic Zinc Finger"/>
    <property type="match status" value="1"/>
</dbReference>
<dbReference type="Gene3D" id="3.30.40.10">
    <property type="entry name" value="Zinc/RING finger domain, C3HC4 (zinc finger)"/>
    <property type="match status" value="1"/>
</dbReference>
<dbReference type="InterPro" id="IPR027370">
    <property type="entry name" value="Znf-RING_euk"/>
</dbReference>
<dbReference type="InterPro" id="IPR000315">
    <property type="entry name" value="Znf_B-box"/>
</dbReference>
<dbReference type="InterPro" id="IPR001841">
    <property type="entry name" value="Znf_RING"/>
</dbReference>
<dbReference type="InterPro" id="IPR013083">
    <property type="entry name" value="Znf_RING/FYVE/PHD"/>
</dbReference>
<dbReference type="InterPro" id="IPR017907">
    <property type="entry name" value="Znf_RING_CS"/>
</dbReference>
<dbReference type="PANTHER" id="PTHR24098">
    <property type="entry name" value="OUTER SEGMENT 5"/>
    <property type="match status" value="1"/>
</dbReference>
<dbReference type="PANTHER" id="PTHR24098:SF14">
    <property type="entry name" value="TRIPARTITE MOTIF-CONTAINING PROTEIN 59"/>
    <property type="match status" value="1"/>
</dbReference>
<dbReference type="Pfam" id="PF00643">
    <property type="entry name" value="zf-B_box"/>
    <property type="match status" value="1"/>
</dbReference>
<dbReference type="Pfam" id="PF13445">
    <property type="entry name" value="zf-RING_UBOX"/>
    <property type="match status" value="1"/>
</dbReference>
<dbReference type="SMART" id="SM00184">
    <property type="entry name" value="RING"/>
    <property type="match status" value="1"/>
</dbReference>
<dbReference type="SUPFAM" id="SSF57845">
    <property type="entry name" value="B-box zinc-binding domain"/>
    <property type="match status" value="1"/>
</dbReference>
<dbReference type="SUPFAM" id="SSF57850">
    <property type="entry name" value="RING/U-box"/>
    <property type="match status" value="1"/>
</dbReference>
<dbReference type="PROSITE" id="PS50119">
    <property type="entry name" value="ZF_BBOX"/>
    <property type="match status" value="1"/>
</dbReference>
<dbReference type="PROSITE" id="PS00518">
    <property type="entry name" value="ZF_RING_1"/>
    <property type="match status" value="1"/>
</dbReference>
<dbReference type="PROSITE" id="PS50089">
    <property type="entry name" value="ZF_RING_2"/>
    <property type="match status" value="1"/>
</dbReference>
<name>TRI59_MOUSE</name>
<sequence length="403" mass="47238">MHNFEEELTCPICYSIFEDPRVLPCSHTFCRNCLENVLQASGNFYIWRPLRIPLKCPNCRSIIEIASTGIESLPVNFALRAIIEKYQQEDHPDVVTCPEHYRQPLNVYCLLDKKLVCGHCLTIGQHHGHPIDDLQSAYLKEKDTPQKLLKQLTDTHWTDITRLIEKLEEQKCHSEKIVQGDKEVVLQYFKELIDTLEQKKKYFLAALCDVGKMINQEYTPQIQGMKEIREQQLELMTITTSLQDESPLKFLEKIDEVRQRVQMLKQRPLPEVQPVEIYPRVSNVLKEEWSRIEIGRIKKAVIPEMRVSSKRTPCSWSDNDEKEMELFKILNIAIVSLISVILMLILLFNHHIITFLNEITSICFSEVFLSVYQSLSKNLYDLNNTVCYTLYLLKEFMWKIVSR</sequence>
<keyword id="KW-0175">Coiled coil</keyword>
<keyword id="KW-0256">Endoplasmic reticulum</keyword>
<keyword id="KW-0472">Membrane</keyword>
<keyword id="KW-0479">Metal-binding</keyword>
<keyword id="KW-1185">Reference proteome</keyword>
<keyword id="KW-0808">Transferase</keyword>
<keyword id="KW-0812">Transmembrane</keyword>
<keyword id="KW-1133">Transmembrane helix</keyword>
<keyword id="KW-0833">Ubl conjugation pathway</keyword>
<keyword id="KW-0862">Zinc</keyword>
<keyword id="KW-0863">Zinc-finger</keyword>
<accession>Q922Y2</accession>
<accession>E9QKA7</accession>
<accession>Q9CSP2</accession>
<accession>Q9CUD5</accession>
<accession>Q9D740</accession>
<feature type="chain" id="PRO_0000249680" description="Tripartite motif-containing protein 59">
    <location>
        <begin position="1"/>
        <end position="403"/>
    </location>
</feature>
<feature type="transmembrane region" description="Helical" evidence="2">
    <location>
        <begin position="329"/>
        <end position="349"/>
    </location>
</feature>
<feature type="zinc finger region" description="RING-type" evidence="4">
    <location>
        <begin position="10"/>
        <end position="60"/>
    </location>
</feature>
<feature type="zinc finger region" description="B box-type" evidence="3">
    <location>
        <begin position="92"/>
        <end position="134"/>
    </location>
</feature>
<feature type="coiled-coil region" evidence="2">
    <location>
        <begin position="163"/>
        <end position="246"/>
    </location>
</feature>
<feature type="binding site" evidence="3">
    <location>
        <position position="97"/>
    </location>
    <ligand>
        <name>Zn(2+)</name>
        <dbReference type="ChEBI" id="CHEBI:29105"/>
    </ligand>
</feature>
<feature type="binding site" evidence="3">
    <location>
        <position position="100"/>
    </location>
    <ligand>
        <name>Zn(2+)</name>
        <dbReference type="ChEBI" id="CHEBI:29105"/>
    </ligand>
</feature>
<feature type="binding site" evidence="3">
    <location>
        <position position="120"/>
    </location>
    <ligand>
        <name>Zn(2+)</name>
        <dbReference type="ChEBI" id="CHEBI:29105"/>
    </ligand>
</feature>
<feature type="binding site" evidence="3">
    <location>
        <position position="126"/>
    </location>
    <ligand>
        <name>Zn(2+)</name>
        <dbReference type="ChEBI" id="CHEBI:29105"/>
    </ligand>
</feature>
<feature type="sequence conflict" description="In Ref. 1; BAB30354." evidence="8" ref="1">
    <original>P</original>
    <variation>E</variation>
    <location>
        <position position="53"/>
    </location>
</feature>
<feature type="sequence conflict" description="In Ref. 1; BAB30354." evidence="8" ref="1">
    <original>P</original>
    <variation>A</variation>
    <location>
        <position position="57"/>
    </location>
</feature>
<feature type="sequence conflict" description="In Ref. 1; BAB30354." evidence="8" ref="1">
    <original>S</original>
    <variation>N</variation>
    <location>
        <position position="61"/>
    </location>
</feature>
<feature type="sequence conflict" description="In Ref. 1; BAB30354." evidence="8" ref="1">
    <original>T</original>
    <variation>S</variation>
    <location>
        <position position="68"/>
    </location>
</feature>
<feature type="sequence conflict" description="In Ref. 1; BAB30354." evidence="8" ref="1">
    <original>E</original>
    <variation>K</variation>
    <location>
        <position position="71"/>
    </location>
</feature>
<feature type="sequence conflict" description="In Ref. 1; BAB30354." evidence="8" ref="1">
    <original>V</original>
    <variation>I</variation>
    <location>
        <position position="75"/>
    </location>
</feature>
<feature type="sequence conflict" description="In Ref. 1; BAB30354." evidence="8" ref="1">
    <original>T</original>
    <variation>S</variation>
    <location>
        <position position="96"/>
    </location>
</feature>
<feature type="sequence conflict" description="In Ref. 1; BAB30354." evidence="8" ref="1">
    <original>G</original>
    <variation>V</variation>
    <location>
        <position position="128"/>
    </location>
</feature>
<feature type="sequence conflict" description="In Ref. 3; AAH06700/AAH25430." evidence="8" ref="3">
    <original>I</original>
    <variation>T</variation>
    <location>
        <position position="193"/>
    </location>
</feature>
<proteinExistence type="evidence at protein level"/>
<organism>
    <name type="scientific">Mus musculus</name>
    <name type="common">Mouse</name>
    <dbReference type="NCBI Taxonomy" id="10090"/>
    <lineage>
        <taxon>Eukaryota</taxon>
        <taxon>Metazoa</taxon>
        <taxon>Chordata</taxon>
        <taxon>Craniata</taxon>
        <taxon>Vertebrata</taxon>
        <taxon>Euteleostomi</taxon>
        <taxon>Mammalia</taxon>
        <taxon>Eutheria</taxon>
        <taxon>Euarchontoglires</taxon>
        <taxon>Glires</taxon>
        <taxon>Rodentia</taxon>
        <taxon>Myomorpha</taxon>
        <taxon>Muroidea</taxon>
        <taxon>Muridae</taxon>
        <taxon>Murinae</taxon>
        <taxon>Mus</taxon>
        <taxon>Mus</taxon>
    </lineage>
</organism>
<comment type="function">
    <text evidence="1 6 7">E3 ubiquitin ligase involved in different processes such as development and immune response (PubMed:22588174, PubMed:29467473). Serves as a negative regulator for innate immune signaling pathways by suppressing RLR-induced activation of IRF3/7 and NF-kappa-B via interaction with adapter ECSIT (PubMed:22588174). Regulates autophagy through modulating both the transcription and the ubiquitination of BECN1. On the one hand, regulates the transcription of BECN1 through negatively modulating the NF-kappa-B pathway. On the other hand, regulates TRAF6-mediated 'Lys-63'-linked ubiquitination of BECN1, thus affecting the formation of the BECN1-PIK3C3 complex. In addition, mediates 'Lys-48'-linked ubiquitination of TRAF6 and thereby promotes TRAF6 proteasomal degradation. Also acts as a critical regulator for early embryo development from blastocyst stage to gastrula through modulating F-actin assembly and WASH1 'Lys-63'-linked ubiquitination (PubMed:29467473).</text>
</comment>
<comment type="catalytic activity">
    <reaction evidence="7">
        <text>S-ubiquitinyl-[E2 ubiquitin-conjugating enzyme]-L-cysteine + [acceptor protein]-L-lysine = [E2 ubiquitin-conjugating enzyme]-L-cysteine + N(6)-ubiquitinyl-[acceptor protein]-L-lysine.</text>
        <dbReference type="EC" id="2.3.2.27"/>
    </reaction>
</comment>
<comment type="pathway">
    <text>Protein modification; protein ubiquitination.</text>
</comment>
<comment type="subunit">
    <text evidence="6">Interacts with ECSIT (PubMed:22588174).</text>
</comment>
<comment type="subcellular location">
    <subcellularLocation>
        <location evidence="6">Endoplasmic reticulum membrane</location>
        <topology evidence="8">Single-pass membrane protein</topology>
    </subcellularLocation>
</comment>
<comment type="tissue specificity">
    <text evidence="5">Moderately expressed in the spleen, brain and heart and very highly expressed in the testis (PubMed:12095697).</text>
</comment>
<comment type="disruption phenotype">
    <text evidence="7">TRIM59-deficiency causes early embryonic lethality. Affects the expression of gastrulation-associated genes during early embryonic development.</text>
</comment>
<comment type="similarity">
    <text evidence="8">Belongs to the TRIM/RBCC family.</text>
</comment>
<protein>
    <recommendedName>
        <fullName>Tripartite motif-containing protein 59</fullName>
        <ecNumber evidence="7">2.3.2.27</ecNumber>
    </recommendedName>
    <alternativeName>
        <fullName>RING finger protein 1</fullName>
    </alternativeName>
</protein>
<reference key="1">
    <citation type="journal article" date="2005" name="Science">
        <title>The transcriptional landscape of the mammalian genome.</title>
        <authorList>
            <person name="Carninci P."/>
            <person name="Kasukawa T."/>
            <person name="Katayama S."/>
            <person name="Gough J."/>
            <person name="Frith M.C."/>
            <person name="Maeda N."/>
            <person name="Oyama R."/>
            <person name="Ravasi T."/>
            <person name="Lenhard B."/>
            <person name="Wells C."/>
            <person name="Kodzius R."/>
            <person name="Shimokawa K."/>
            <person name="Bajic V.B."/>
            <person name="Brenner S.E."/>
            <person name="Batalov S."/>
            <person name="Forrest A.R."/>
            <person name="Zavolan M."/>
            <person name="Davis M.J."/>
            <person name="Wilming L.G."/>
            <person name="Aidinis V."/>
            <person name="Allen J.E."/>
            <person name="Ambesi-Impiombato A."/>
            <person name="Apweiler R."/>
            <person name="Aturaliya R.N."/>
            <person name="Bailey T.L."/>
            <person name="Bansal M."/>
            <person name="Baxter L."/>
            <person name="Beisel K.W."/>
            <person name="Bersano T."/>
            <person name="Bono H."/>
            <person name="Chalk A.M."/>
            <person name="Chiu K.P."/>
            <person name="Choudhary V."/>
            <person name="Christoffels A."/>
            <person name="Clutterbuck D.R."/>
            <person name="Crowe M.L."/>
            <person name="Dalla E."/>
            <person name="Dalrymple B.P."/>
            <person name="de Bono B."/>
            <person name="Della Gatta G."/>
            <person name="di Bernardo D."/>
            <person name="Down T."/>
            <person name="Engstrom P."/>
            <person name="Fagiolini M."/>
            <person name="Faulkner G."/>
            <person name="Fletcher C.F."/>
            <person name="Fukushima T."/>
            <person name="Furuno M."/>
            <person name="Futaki S."/>
            <person name="Gariboldi M."/>
            <person name="Georgii-Hemming P."/>
            <person name="Gingeras T.R."/>
            <person name="Gojobori T."/>
            <person name="Green R.E."/>
            <person name="Gustincich S."/>
            <person name="Harbers M."/>
            <person name="Hayashi Y."/>
            <person name="Hensch T.K."/>
            <person name="Hirokawa N."/>
            <person name="Hill D."/>
            <person name="Huminiecki L."/>
            <person name="Iacono M."/>
            <person name="Ikeo K."/>
            <person name="Iwama A."/>
            <person name="Ishikawa T."/>
            <person name="Jakt M."/>
            <person name="Kanapin A."/>
            <person name="Katoh M."/>
            <person name="Kawasawa Y."/>
            <person name="Kelso J."/>
            <person name="Kitamura H."/>
            <person name="Kitano H."/>
            <person name="Kollias G."/>
            <person name="Krishnan S.P."/>
            <person name="Kruger A."/>
            <person name="Kummerfeld S.K."/>
            <person name="Kurochkin I.V."/>
            <person name="Lareau L.F."/>
            <person name="Lazarevic D."/>
            <person name="Lipovich L."/>
            <person name="Liu J."/>
            <person name="Liuni S."/>
            <person name="McWilliam S."/>
            <person name="Madan Babu M."/>
            <person name="Madera M."/>
            <person name="Marchionni L."/>
            <person name="Matsuda H."/>
            <person name="Matsuzawa S."/>
            <person name="Miki H."/>
            <person name="Mignone F."/>
            <person name="Miyake S."/>
            <person name="Morris K."/>
            <person name="Mottagui-Tabar S."/>
            <person name="Mulder N."/>
            <person name="Nakano N."/>
            <person name="Nakauchi H."/>
            <person name="Ng P."/>
            <person name="Nilsson R."/>
            <person name="Nishiguchi S."/>
            <person name="Nishikawa S."/>
            <person name="Nori F."/>
            <person name="Ohara O."/>
            <person name="Okazaki Y."/>
            <person name="Orlando V."/>
            <person name="Pang K.C."/>
            <person name="Pavan W.J."/>
            <person name="Pavesi G."/>
            <person name="Pesole G."/>
            <person name="Petrovsky N."/>
            <person name="Piazza S."/>
            <person name="Reed J."/>
            <person name="Reid J.F."/>
            <person name="Ring B.Z."/>
            <person name="Ringwald M."/>
            <person name="Rost B."/>
            <person name="Ruan Y."/>
            <person name="Salzberg S.L."/>
            <person name="Sandelin A."/>
            <person name="Schneider C."/>
            <person name="Schoenbach C."/>
            <person name="Sekiguchi K."/>
            <person name="Semple C.A."/>
            <person name="Seno S."/>
            <person name="Sessa L."/>
            <person name="Sheng Y."/>
            <person name="Shibata Y."/>
            <person name="Shimada H."/>
            <person name="Shimada K."/>
            <person name="Silva D."/>
            <person name="Sinclair B."/>
            <person name="Sperling S."/>
            <person name="Stupka E."/>
            <person name="Sugiura K."/>
            <person name="Sultana R."/>
            <person name="Takenaka Y."/>
            <person name="Taki K."/>
            <person name="Tammoja K."/>
            <person name="Tan S.L."/>
            <person name="Tang S."/>
            <person name="Taylor M.S."/>
            <person name="Tegner J."/>
            <person name="Teichmann S.A."/>
            <person name="Ueda H.R."/>
            <person name="van Nimwegen E."/>
            <person name="Verardo R."/>
            <person name="Wei C.L."/>
            <person name="Yagi K."/>
            <person name="Yamanishi H."/>
            <person name="Zabarovsky E."/>
            <person name="Zhu S."/>
            <person name="Zimmer A."/>
            <person name="Hide W."/>
            <person name="Bult C."/>
            <person name="Grimmond S.M."/>
            <person name="Teasdale R.D."/>
            <person name="Liu E.T."/>
            <person name="Brusic V."/>
            <person name="Quackenbush J."/>
            <person name="Wahlestedt C."/>
            <person name="Mattick J.S."/>
            <person name="Hume D.A."/>
            <person name="Kai C."/>
            <person name="Sasaki D."/>
            <person name="Tomaru Y."/>
            <person name="Fukuda S."/>
            <person name="Kanamori-Katayama M."/>
            <person name="Suzuki M."/>
            <person name="Aoki J."/>
            <person name="Arakawa T."/>
            <person name="Iida J."/>
            <person name="Imamura K."/>
            <person name="Itoh M."/>
            <person name="Kato T."/>
            <person name="Kawaji H."/>
            <person name="Kawagashira N."/>
            <person name="Kawashima T."/>
            <person name="Kojima M."/>
            <person name="Kondo S."/>
            <person name="Konno H."/>
            <person name="Nakano K."/>
            <person name="Ninomiya N."/>
            <person name="Nishio T."/>
            <person name="Okada M."/>
            <person name="Plessy C."/>
            <person name="Shibata K."/>
            <person name="Shiraki T."/>
            <person name="Suzuki S."/>
            <person name="Tagami M."/>
            <person name="Waki K."/>
            <person name="Watahiki A."/>
            <person name="Okamura-Oho Y."/>
            <person name="Suzuki H."/>
            <person name="Kawai J."/>
            <person name="Hayashizaki Y."/>
        </authorList>
    </citation>
    <scope>NUCLEOTIDE SEQUENCE [LARGE SCALE MRNA]</scope>
    <source>
        <strain>C57BL/6J</strain>
        <tissue>Embryo</tissue>
        <tissue>Testis</tissue>
        <tissue>Tongue</tissue>
    </source>
</reference>
<reference key="2">
    <citation type="journal article" date="2009" name="PLoS Biol.">
        <title>Lineage-specific biology revealed by a finished genome assembly of the mouse.</title>
        <authorList>
            <person name="Church D.M."/>
            <person name="Goodstadt L."/>
            <person name="Hillier L.W."/>
            <person name="Zody M.C."/>
            <person name="Goldstein S."/>
            <person name="She X."/>
            <person name="Bult C.J."/>
            <person name="Agarwala R."/>
            <person name="Cherry J.L."/>
            <person name="DiCuccio M."/>
            <person name="Hlavina W."/>
            <person name="Kapustin Y."/>
            <person name="Meric P."/>
            <person name="Maglott D."/>
            <person name="Birtle Z."/>
            <person name="Marques A.C."/>
            <person name="Graves T."/>
            <person name="Zhou S."/>
            <person name="Teague B."/>
            <person name="Potamousis K."/>
            <person name="Churas C."/>
            <person name="Place M."/>
            <person name="Herschleb J."/>
            <person name="Runnheim R."/>
            <person name="Forrest D."/>
            <person name="Amos-Landgraf J."/>
            <person name="Schwartz D.C."/>
            <person name="Cheng Z."/>
            <person name="Lindblad-Toh K."/>
            <person name="Eichler E.E."/>
            <person name="Ponting C.P."/>
        </authorList>
    </citation>
    <scope>NUCLEOTIDE SEQUENCE [LARGE SCALE GENOMIC DNA]</scope>
    <source>
        <strain>C57BL/6J</strain>
    </source>
</reference>
<reference key="3">
    <citation type="journal article" date="2004" name="Genome Res.">
        <title>The status, quality, and expansion of the NIH full-length cDNA project: the Mammalian Gene Collection (MGC).</title>
        <authorList>
            <consortium name="The MGC Project Team"/>
        </authorList>
    </citation>
    <scope>NUCLEOTIDE SEQUENCE [LARGE SCALE MRNA]</scope>
    <source>
        <strain>Czech II</strain>
        <tissue>Mammary tumor</tissue>
    </source>
</reference>
<reference key="4">
    <citation type="journal article" date="2002" name="Gene">
        <title>Molecular cloning, mapping and characterization of a novel mouse RING finger gene, Mrf1.</title>
        <authorList>
            <person name="Chang R."/>
            <person name="Xu X."/>
            <person name="Li M.D."/>
        </authorList>
    </citation>
    <scope>TISSUE SPECIFICITY</scope>
</reference>
<reference key="5">
    <citation type="journal article" date="2012" name="Biochem. Biophys. Res. Commun.">
        <title>TRIM59 interacts with ECSIT and negatively regulates NF-kappaB and IRF-3/7-mediated signal pathways.</title>
        <authorList>
            <person name="Kondo T."/>
            <person name="Watanabe M."/>
            <person name="Hatakeyama S."/>
        </authorList>
    </citation>
    <scope>INTERACTION WITH ECSIT</scope>
    <scope>FUNCTION</scope>
    <scope>SUBCELLULAR LOCATION</scope>
</reference>
<reference key="6">
    <citation type="journal article" date="2018" name="Cell Death Dis.">
        <title>Embryonic lethality in mice lacking Trim59 due to impaired gastrulation development.</title>
        <authorList>
            <person name="Su X."/>
            <person name="Wu C."/>
            <person name="Ye X."/>
            <person name="Zeng M."/>
            <person name="Zhang Z."/>
            <person name="Che Y."/>
            <person name="Zhang Y."/>
            <person name="Liu L."/>
            <person name="Lin Y."/>
            <person name="Yang R."/>
        </authorList>
    </citation>
    <scope>FUNCTION</scope>
    <scope>DISRUPTION PHENOTYPE</scope>
    <scope>CATALYTIC ACTIVITY</scope>
</reference>
<evidence type="ECO:0000250" key="1">
    <source>
        <dbReference type="UniProtKB" id="Q8IWR1"/>
    </source>
</evidence>
<evidence type="ECO:0000255" key="2"/>
<evidence type="ECO:0000255" key="3">
    <source>
        <dbReference type="PROSITE-ProRule" id="PRU00024"/>
    </source>
</evidence>
<evidence type="ECO:0000255" key="4">
    <source>
        <dbReference type="PROSITE-ProRule" id="PRU00175"/>
    </source>
</evidence>
<evidence type="ECO:0000269" key="5">
    <source>
    </source>
</evidence>
<evidence type="ECO:0000269" key="6">
    <source>
    </source>
</evidence>
<evidence type="ECO:0000269" key="7">
    <source>
    </source>
</evidence>
<evidence type="ECO:0000305" key="8"/>
<gene>
    <name type="primary">Trim59</name>
    <name type="synonym">Mrf1</name>
</gene>